<gene>
    <name type="primary">bepD</name>
    <name type="ordered locus">BR0291</name>
    <name type="ordered locus">BS1330_I0292</name>
</gene>
<accession>Q8G2M7</accession>
<accession>G0K647</accession>
<organism>
    <name type="scientific">Brucella suis biovar 1 (strain 1330)</name>
    <dbReference type="NCBI Taxonomy" id="204722"/>
    <lineage>
        <taxon>Bacteria</taxon>
        <taxon>Pseudomonadati</taxon>
        <taxon>Pseudomonadota</taxon>
        <taxon>Alphaproteobacteria</taxon>
        <taxon>Hyphomicrobiales</taxon>
        <taxon>Brucellaceae</taxon>
        <taxon>Brucella/Ochrobactrum group</taxon>
        <taxon>Brucella</taxon>
    </lineage>
</organism>
<dbReference type="EMBL" id="AE014291">
    <property type="protein sequence ID" value="AAN29240.1"/>
    <property type="molecule type" value="Genomic_DNA"/>
</dbReference>
<dbReference type="EMBL" id="CP002997">
    <property type="protein sequence ID" value="AEM17653.1"/>
    <property type="molecule type" value="Genomic_DNA"/>
</dbReference>
<dbReference type="RefSeq" id="WP_006189804.1">
    <property type="nucleotide sequence ID" value="NZ_KN046804.1"/>
</dbReference>
<dbReference type="SMR" id="Q8G2M7"/>
<dbReference type="GeneID" id="45051424"/>
<dbReference type="KEGG" id="bms:BR0291"/>
<dbReference type="KEGG" id="bsi:BS1330_I0292"/>
<dbReference type="PATRIC" id="fig|204722.21.peg.1777"/>
<dbReference type="HOGENOM" id="CLU_018816_2_1_5"/>
<dbReference type="PhylomeDB" id="Q8G2M7"/>
<dbReference type="Proteomes" id="UP000007104">
    <property type="component" value="Chromosome I"/>
</dbReference>
<dbReference type="GO" id="GO:0042597">
    <property type="term" value="C:periplasmic space"/>
    <property type="evidence" value="ECO:0007669"/>
    <property type="project" value="UniProtKB-SubCell"/>
</dbReference>
<dbReference type="GO" id="GO:0005886">
    <property type="term" value="C:plasma membrane"/>
    <property type="evidence" value="ECO:0007669"/>
    <property type="project" value="TreeGrafter"/>
</dbReference>
<dbReference type="GO" id="GO:0022857">
    <property type="term" value="F:transmembrane transporter activity"/>
    <property type="evidence" value="ECO:0007669"/>
    <property type="project" value="InterPro"/>
</dbReference>
<dbReference type="GO" id="GO:0046677">
    <property type="term" value="P:response to antibiotic"/>
    <property type="evidence" value="ECO:0007669"/>
    <property type="project" value="UniProtKB-KW"/>
</dbReference>
<dbReference type="FunFam" id="2.40.420.20:FF:000001">
    <property type="entry name" value="Efflux RND transporter periplasmic adaptor subunit"/>
    <property type="match status" value="1"/>
</dbReference>
<dbReference type="Gene3D" id="2.40.30.170">
    <property type="match status" value="1"/>
</dbReference>
<dbReference type="Gene3D" id="2.40.420.20">
    <property type="match status" value="1"/>
</dbReference>
<dbReference type="Gene3D" id="2.40.50.100">
    <property type="match status" value="1"/>
</dbReference>
<dbReference type="Gene3D" id="1.10.287.470">
    <property type="entry name" value="Helix hairpin bin"/>
    <property type="match status" value="1"/>
</dbReference>
<dbReference type="InterPro" id="IPR032317">
    <property type="entry name" value="CusB_D23"/>
</dbReference>
<dbReference type="InterPro" id="IPR051160">
    <property type="entry name" value="MFP_Efflux"/>
</dbReference>
<dbReference type="InterPro" id="IPR006143">
    <property type="entry name" value="RND_pump_MFP"/>
</dbReference>
<dbReference type="NCBIfam" id="TIGR01730">
    <property type="entry name" value="RND_mfp"/>
    <property type="match status" value="1"/>
</dbReference>
<dbReference type="PANTHER" id="PTHR30158">
    <property type="entry name" value="ACRA/E-RELATED COMPONENT OF DRUG EFFLUX TRANSPORTER"/>
    <property type="match status" value="1"/>
</dbReference>
<dbReference type="Pfam" id="PF16576">
    <property type="entry name" value="HlyD_D23"/>
    <property type="match status" value="1"/>
</dbReference>
<dbReference type="SUPFAM" id="SSF111369">
    <property type="entry name" value="HlyD-like secretion proteins"/>
    <property type="match status" value="1"/>
</dbReference>
<keyword id="KW-0046">Antibiotic resistance</keyword>
<keyword id="KW-0175">Coiled coil</keyword>
<keyword id="KW-0574">Periplasm</keyword>
<keyword id="KW-0732">Signal</keyword>
<keyword id="KW-0813">Transport</keyword>
<evidence type="ECO:0000255" key="1"/>
<evidence type="ECO:0000269" key="2">
    <source>
    </source>
</evidence>
<evidence type="ECO:0000305" key="3"/>
<evidence type="ECO:0000305" key="4">
    <source>
    </source>
</evidence>
<feature type="signal peptide" evidence="1">
    <location>
        <begin position="1"/>
        <end position="26"/>
    </location>
</feature>
<feature type="chain" id="PRO_0000390648" description="Efflux pump periplasmic linker BepD">
    <location>
        <begin position="27"/>
        <end position="397"/>
    </location>
</feature>
<feature type="coiled-coil region" evidence="1">
    <location>
        <begin position="98"/>
        <end position="139"/>
    </location>
</feature>
<proteinExistence type="evidence at protein level"/>
<sequence>MTLNRTIRCFAAGAAFIVFAAQPALAQAPGGATPPPPQVFVVDIKPHDVPVTYEYAARINAYRNVQVRARVGGILLHRNFVEGTQVKAGEVLFEIDPAPYQAELEKAQAQVAQAEAQYQQSIRDAERAEQLVQQKVQSAAVRDSAFATRDLNKAAVAAAKAQLRTAELNLSYTKVTAPISGITSQEQVNEGSLIGTDASSSLLTSVTQLDPVYVNFSFTDTEAAEIAKLRAERGATGEDADRLKIKILFGDGKAYDHEGTIDFTSSSLDTETGTLGVRAVVENPNHRLIPGQFVRAEILDIQVKDAITVPKAALMQSAQGQFVYVVNKDNVVEVRPVTGARELKNDWLISQGLNSGDRVITEGVIKAVPGRPVQPVVQGVDDKAQAEAGKEQAADKK</sequence>
<comment type="function">
    <text evidence="2">Involved in resistance to several unrelated toxic compounds, such as dyes, detergents and antibiotics.</text>
</comment>
<comment type="subunit">
    <text evidence="2">Probably part of a tripartite efflux pump, which is composed of an outer membrane efflux protein, an inner membrane protein and a protein that expands the periplasmic space. Could form a tripartite pump with BepC and BepE.</text>
</comment>
<comment type="subcellular location">
    <subcellularLocation>
        <location evidence="3">Periplasm</location>
    </subcellularLocation>
</comment>
<comment type="induction">
    <text evidence="4">Repressed by BepR.</text>
</comment>
<comment type="similarity">
    <text evidence="3">Belongs to the membrane fusion protein (MFP) (TC 8.A.1) family.</text>
</comment>
<reference key="1">
    <citation type="journal article" date="2002" name="Proc. Natl. Acad. Sci. U.S.A.">
        <title>The Brucella suis genome reveals fundamental similarities between animal and plant pathogens and symbionts.</title>
        <authorList>
            <person name="Paulsen I.T."/>
            <person name="Seshadri R."/>
            <person name="Nelson K.E."/>
            <person name="Eisen J.A."/>
            <person name="Heidelberg J.F."/>
            <person name="Read T.D."/>
            <person name="Dodson R.J."/>
            <person name="Umayam L.A."/>
            <person name="Brinkac L.M."/>
            <person name="Beanan M.J."/>
            <person name="Daugherty S.C."/>
            <person name="DeBoy R.T."/>
            <person name="Durkin A.S."/>
            <person name="Kolonay J.F."/>
            <person name="Madupu R."/>
            <person name="Nelson W.C."/>
            <person name="Ayodeji B."/>
            <person name="Kraul M."/>
            <person name="Shetty J."/>
            <person name="Malek J.A."/>
            <person name="Van Aken S.E."/>
            <person name="Riedmuller S."/>
            <person name="Tettelin H."/>
            <person name="Gill S.R."/>
            <person name="White O."/>
            <person name="Salzberg S.L."/>
            <person name="Hoover D.L."/>
            <person name="Lindler L.E."/>
            <person name="Halling S.M."/>
            <person name="Boyle S.M."/>
            <person name="Fraser C.M."/>
        </authorList>
    </citation>
    <scope>NUCLEOTIDE SEQUENCE [LARGE SCALE GENOMIC DNA]</scope>
    <source>
        <strain>1330</strain>
    </source>
</reference>
<reference key="2">
    <citation type="journal article" date="2011" name="J. Bacteriol.">
        <title>Revised genome sequence of Brucella suis 1330.</title>
        <authorList>
            <person name="Tae H."/>
            <person name="Shallom S."/>
            <person name="Settlage R."/>
            <person name="Preston D."/>
            <person name="Adams L.G."/>
            <person name="Garner H.R."/>
        </authorList>
    </citation>
    <scope>NUCLEOTIDE SEQUENCE [LARGE SCALE GENOMIC DNA]</scope>
    <source>
        <strain>1330</strain>
    </source>
</reference>
<reference key="3">
    <citation type="journal article" date="2009" name="J. Bacteriol.">
        <title>Interplay between two RND systems mediating antimicrobial resistance in Brucella suis.</title>
        <authorList>
            <person name="Martin F.A."/>
            <person name="Posadas D.M."/>
            <person name="Carrica M.C."/>
            <person name="Cravero S.L."/>
            <person name="O'Callaghan D."/>
            <person name="Zorreguieta A."/>
        </authorList>
    </citation>
    <scope>FUNCTION IN RESISTANCE</scope>
    <scope>SUBUNIT</scope>
    <scope>INDUCTION</scope>
    <source>
        <strain>1330</strain>
    </source>
</reference>
<protein>
    <recommendedName>
        <fullName>Efflux pump periplasmic linker BepD</fullName>
    </recommendedName>
</protein>
<name>BEPD_BRUSU</name>